<comment type="catalytic activity">
    <reaction evidence="1">
        <text>tRNA(Asn) + L-asparagine + ATP = L-asparaginyl-tRNA(Asn) + AMP + diphosphate + H(+)</text>
        <dbReference type="Rhea" id="RHEA:11180"/>
        <dbReference type="Rhea" id="RHEA-COMP:9659"/>
        <dbReference type="Rhea" id="RHEA-COMP:9674"/>
        <dbReference type="ChEBI" id="CHEBI:15378"/>
        <dbReference type="ChEBI" id="CHEBI:30616"/>
        <dbReference type="ChEBI" id="CHEBI:33019"/>
        <dbReference type="ChEBI" id="CHEBI:58048"/>
        <dbReference type="ChEBI" id="CHEBI:78442"/>
        <dbReference type="ChEBI" id="CHEBI:78515"/>
        <dbReference type="ChEBI" id="CHEBI:456215"/>
        <dbReference type="EC" id="6.1.1.22"/>
    </reaction>
</comment>
<comment type="subunit">
    <text evidence="1">Homodimer.</text>
</comment>
<comment type="subcellular location">
    <subcellularLocation>
        <location evidence="1">Cytoplasm</location>
    </subcellularLocation>
</comment>
<comment type="similarity">
    <text evidence="1">Belongs to the class-II aminoacyl-tRNA synthetase family.</text>
</comment>
<proteinExistence type="inferred from homology"/>
<dbReference type="EC" id="6.1.1.22" evidence="1"/>
<dbReference type="EMBL" id="CP000698">
    <property type="protein sequence ID" value="ABQ27130.1"/>
    <property type="molecule type" value="Genomic_DNA"/>
</dbReference>
<dbReference type="RefSeq" id="WP_011939799.1">
    <property type="nucleotide sequence ID" value="NC_009483.1"/>
</dbReference>
<dbReference type="SMR" id="A5G5R2"/>
<dbReference type="STRING" id="351605.Gura_2958"/>
<dbReference type="KEGG" id="gur:Gura_2958"/>
<dbReference type="HOGENOM" id="CLU_004553_2_0_7"/>
<dbReference type="OrthoDB" id="9802326at2"/>
<dbReference type="Proteomes" id="UP000006695">
    <property type="component" value="Chromosome"/>
</dbReference>
<dbReference type="GO" id="GO:0005737">
    <property type="term" value="C:cytoplasm"/>
    <property type="evidence" value="ECO:0007669"/>
    <property type="project" value="UniProtKB-SubCell"/>
</dbReference>
<dbReference type="GO" id="GO:0004816">
    <property type="term" value="F:asparagine-tRNA ligase activity"/>
    <property type="evidence" value="ECO:0007669"/>
    <property type="project" value="UniProtKB-UniRule"/>
</dbReference>
<dbReference type="GO" id="GO:0005524">
    <property type="term" value="F:ATP binding"/>
    <property type="evidence" value="ECO:0007669"/>
    <property type="project" value="UniProtKB-UniRule"/>
</dbReference>
<dbReference type="GO" id="GO:0003676">
    <property type="term" value="F:nucleic acid binding"/>
    <property type="evidence" value="ECO:0007669"/>
    <property type="project" value="InterPro"/>
</dbReference>
<dbReference type="GO" id="GO:0006421">
    <property type="term" value="P:asparaginyl-tRNA aminoacylation"/>
    <property type="evidence" value="ECO:0007669"/>
    <property type="project" value="UniProtKB-UniRule"/>
</dbReference>
<dbReference type="CDD" id="cd00776">
    <property type="entry name" value="AsxRS_core"/>
    <property type="match status" value="1"/>
</dbReference>
<dbReference type="CDD" id="cd04318">
    <property type="entry name" value="EcAsnRS_like_N"/>
    <property type="match status" value="1"/>
</dbReference>
<dbReference type="FunFam" id="3.30.930.10:FF:000016">
    <property type="entry name" value="Asparagine--tRNA ligase"/>
    <property type="match status" value="1"/>
</dbReference>
<dbReference type="Gene3D" id="3.30.930.10">
    <property type="entry name" value="Bira Bifunctional Protein, Domain 2"/>
    <property type="match status" value="1"/>
</dbReference>
<dbReference type="Gene3D" id="2.40.50.140">
    <property type="entry name" value="Nucleic acid-binding proteins"/>
    <property type="match status" value="1"/>
</dbReference>
<dbReference type="HAMAP" id="MF_00534">
    <property type="entry name" value="Asn_tRNA_synth"/>
    <property type="match status" value="1"/>
</dbReference>
<dbReference type="InterPro" id="IPR004364">
    <property type="entry name" value="Aa-tRNA-synt_II"/>
</dbReference>
<dbReference type="InterPro" id="IPR006195">
    <property type="entry name" value="aa-tRNA-synth_II"/>
</dbReference>
<dbReference type="InterPro" id="IPR045864">
    <property type="entry name" value="aa-tRNA-synth_II/BPL/LPL"/>
</dbReference>
<dbReference type="InterPro" id="IPR004522">
    <property type="entry name" value="Asn-tRNA-ligase"/>
</dbReference>
<dbReference type="InterPro" id="IPR002312">
    <property type="entry name" value="Asp/Asn-tRNA-synth_IIb"/>
</dbReference>
<dbReference type="InterPro" id="IPR012340">
    <property type="entry name" value="NA-bd_OB-fold"/>
</dbReference>
<dbReference type="InterPro" id="IPR004365">
    <property type="entry name" value="NA-bd_OB_tRNA"/>
</dbReference>
<dbReference type="NCBIfam" id="TIGR00457">
    <property type="entry name" value="asnS"/>
    <property type="match status" value="1"/>
</dbReference>
<dbReference type="NCBIfam" id="NF003037">
    <property type="entry name" value="PRK03932.1"/>
    <property type="match status" value="1"/>
</dbReference>
<dbReference type="PANTHER" id="PTHR22594:SF34">
    <property type="entry name" value="ASPARAGINE--TRNA LIGASE, MITOCHONDRIAL-RELATED"/>
    <property type="match status" value="1"/>
</dbReference>
<dbReference type="PANTHER" id="PTHR22594">
    <property type="entry name" value="ASPARTYL/LYSYL-TRNA SYNTHETASE"/>
    <property type="match status" value="1"/>
</dbReference>
<dbReference type="Pfam" id="PF00152">
    <property type="entry name" value="tRNA-synt_2"/>
    <property type="match status" value="1"/>
</dbReference>
<dbReference type="Pfam" id="PF01336">
    <property type="entry name" value="tRNA_anti-codon"/>
    <property type="match status" value="1"/>
</dbReference>
<dbReference type="PRINTS" id="PR01042">
    <property type="entry name" value="TRNASYNTHASP"/>
</dbReference>
<dbReference type="SUPFAM" id="SSF55681">
    <property type="entry name" value="Class II aaRS and biotin synthetases"/>
    <property type="match status" value="1"/>
</dbReference>
<dbReference type="SUPFAM" id="SSF50249">
    <property type="entry name" value="Nucleic acid-binding proteins"/>
    <property type="match status" value="1"/>
</dbReference>
<dbReference type="PROSITE" id="PS50862">
    <property type="entry name" value="AA_TRNA_LIGASE_II"/>
    <property type="match status" value="1"/>
</dbReference>
<feature type="chain" id="PRO_1000081849" description="Asparagine--tRNA ligase">
    <location>
        <begin position="1"/>
        <end position="461"/>
    </location>
</feature>
<gene>
    <name evidence="1" type="primary">asnS</name>
    <name type="ordered locus">Gura_2958</name>
</gene>
<protein>
    <recommendedName>
        <fullName evidence="1">Asparagine--tRNA ligase</fullName>
        <ecNumber evidence="1">6.1.1.22</ecNumber>
    </recommendedName>
    <alternativeName>
        <fullName evidence="1">Asparaginyl-tRNA synthetase</fullName>
        <shortName evidence="1">AsnRS</shortName>
    </alternativeName>
</protein>
<name>SYN_GEOUR</name>
<sequence>MYGRTRVSAALAASRPGEELVLKGWVRTVRVGKDVTFLAINDGSCMTSLQVVVEPALPNYQDVCRIGTGSAVAVRGILRESPAAGQKYELAAEELEIIGPADDSYPLQKKRHSFEYLRTIAHLRPRTNTFGAVFRVRSSLAQAVHRFFAERGFLYVHTPIITANDCEGAGELFRVTTLDMARPPLAAGEVDYSGDFFAQATGLTVSGQLEGELFAQAFSDIYTFGPTFRAENSNTARHAAEFWMIEPELAFADLMADAALAEDFLKFLCRHVLDNCGEDMAFFNEQIDKGLLERVRAVADSSFAVMEYTEAITHLKKAKVPFAFPVEWGLDLQSEHERYITEKVVGGPVFLVNYPKDIKAFYMRQNDDGKTVAAMDLLVPKVGEIIGGSQREERLDLLLERMAQMGINEDGLWWYLDSRRWGSCPHAGFGLGFERLLMYLTGMENIRDVIPFPRTPRHAEF</sequence>
<reference key="1">
    <citation type="submission" date="2007-05" db="EMBL/GenBank/DDBJ databases">
        <title>Complete sequence of Geobacter uraniireducens Rf4.</title>
        <authorList>
            <consortium name="US DOE Joint Genome Institute"/>
            <person name="Copeland A."/>
            <person name="Lucas S."/>
            <person name="Lapidus A."/>
            <person name="Barry K."/>
            <person name="Detter J.C."/>
            <person name="Glavina del Rio T."/>
            <person name="Hammon N."/>
            <person name="Israni S."/>
            <person name="Dalin E."/>
            <person name="Tice H."/>
            <person name="Pitluck S."/>
            <person name="Chertkov O."/>
            <person name="Brettin T."/>
            <person name="Bruce D."/>
            <person name="Han C."/>
            <person name="Schmutz J."/>
            <person name="Larimer F."/>
            <person name="Land M."/>
            <person name="Hauser L."/>
            <person name="Kyrpides N."/>
            <person name="Mikhailova N."/>
            <person name="Shelobolina E."/>
            <person name="Aklujkar M."/>
            <person name="Lovley D."/>
            <person name="Richardson P."/>
        </authorList>
    </citation>
    <scope>NUCLEOTIDE SEQUENCE [LARGE SCALE GENOMIC DNA]</scope>
    <source>
        <strain>ATCC BAA-1134 / JCM 13001 / Rf4</strain>
    </source>
</reference>
<accession>A5G5R2</accession>
<organism>
    <name type="scientific">Geotalea uraniireducens (strain Rf4)</name>
    <name type="common">Geobacter uraniireducens</name>
    <dbReference type="NCBI Taxonomy" id="351605"/>
    <lineage>
        <taxon>Bacteria</taxon>
        <taxon>Pseudomonadati</taxon>
        <taxon>Thermodesulfobacteriota</taxon>
        <taxon>Desulfuromonadia</taxon>
        <taxon>Geobacterales</taxon>
        <taxon>Geobacteraceae</taxon>
        <taxon>Geotalea</taxon>
    </lineage>
</organism>
<evidence type="ECO:0000255" key="1">
    <source>
        <dbReference type="HAMAP-Rule" id="MF_00534"/>
    </source>
</evidence>
<keyword id="KW-0030">Aminoacyl-tRNA synthetase</keyword>
<keyword id="KW-0067">ATP-binding</keyword>
<keyword id="KW-0963">Cytoplasm</keyword>
<keyword id="KW-0436">Ligase</keyword>
<keyword id="KW-0547">Nucleotide-binding</keyword>
<keyword id="KW-0648">Protein biosynthesis</keyword>
<keyword id="KW-1185">Reference proteome</keyword>